<name>DAPD_LARHH</name>
<gene>
    <name evidence="1" type="primary">dapD</name>
    <name type="ordered locus">LHK_00679</name>
</gene>
<sequence>MTPIQALIEDAFERRADITPATVTPETKAAIDAVIADIDAGRLRVAEKIAGEWVTHQWLKKAVLLSFRIRDNAVLDDGVSRYFDKVDTKFADWDAARFQAAGFRAVPGAVVRKGSYIAKNTVLMPSFVNIGAFVDEGTMVDTWATVGSCAQIGKNVHLSGGVGIGGVLEPLQANPTIIEDNCFIGARSEIVEGVIVEEGSVISMGVYIGQSTRIFDRETGEVSYGRVPAGSVVVSGNLPSKDGSYSLYCAVIVKKVDAKTRGKVGINELLRGI</sequence>
<dbReference type="EC" id="2.3.1.117" evidence="1"/>
<dbReference type="EMBL" id="CP001154">
    <property type="protein sequence ID" value="ACO73672.1"/>
    <property type="molecule type" value="Genomic_DNA"/>
</dbReference>
<dbReference type="RefSeq" id="WP_012696164.1">
    <property type="nucleotide sequence ID" value="NC_012559.1"/>
</dbReference>
<dbReference type="SMR" id="C1DD37"/>
<dbReference type="STRING" id="557598.LHK_00679"/>
<dbReference type="KEGG" id="lhk:LHK_00679"/>
<dbReference type="eggNOG" id="COG2171">
    <property type="taxonomic scope" value="Bacteria"/>
</dbReference>
<dbReference type="HOGENOM" id="CLU_050859_0_1_4"/>
<dbReference type="UniPathway" id="UPA00034">
    <property type="reaction ID" value="UER00019"/>
</dbReference>
<dbReference type="Proteomes" id="UP000002010">
    <property type="component" value="Chromosome"/>
</dbReference>
<dbReference type="GO" id="GO:0005737">
    <property type="term" value="C:cytoplasm"/>
    <property type="evidence" value="ECO:0007669"/>
    <property type="project" value="UniProtKB-SubCell"/>
</dbReference>
<dbReference type="GO" id="GO:0008666">
    <property type="term" value="F:2,3,4,5-tetrahydropyridine-2,6-dicarboxylate N-succinyltransferase activity"/>
    <property type="evidence" value="ECO:0007669"/>
    <property type="project" value="UniProtKB-UniRule"/>
</dbReference>
<dbReference type="GO" id="GO:0016779">
    <property type="term" value="F:nucleotidyltransferase activity"/>
    <property type="evidence" value="ECO:0007669"/>
    <property type="project" value="TreeGrafter"/>
</dbReference>
<dbReference type="GO" id="GO:0019877">
    <property type="term" value="P:diaminopimelate biosynthetic process"/>
    <property type="evidence" value="ECO:0007669"/>
    <property type="project" value="UniProtKB-UniRule"/>
</dbReference>
<dbReference type="GO" id="GO:0009089">
    <property type="term" value="P:lysine biosynthetic process via diaminopimelate"/>
    <property type="evidence" value="ECO:0007669"/>
    <property type="project" value="UniProtKB-UniRule"/>
</dbReference>
<dbReference type="CDD" id="cd03350">
    <property type="entry name" value="LbH_THP_succinylT"/>
    <property type="match status" value="1"/>
</dbReference>
<dbReference type="Gene3D" id="2.160.10.10">
    <property type="entry name" value="Hexapeptide repeat proteins"/>
    <property type="match status" value="1"/>
</dbReference>
<dbReference type="Gene3D" id="1.10.166.10">
    <property type="entry name" value="Tetrahydrodipicolinate-N-succinyltransferase, N-terminal domain"/>
    <property type="match status" value="1"/>
</dbReference>
<dbReference type="HAMAP" id="MF_00811">
    <property type="entry name" value="DapD"/>
    <property type="match status" value="1"/>
</dbReference>
<dbReference type="InterPro" id="IPR005664">
    <property type="entry name" value="DapD_Trfase_Hexpep_rpt_fam"/>
</dbReference>
<dbReference type="InterPro" id="IPR001451">
    <property type="entry name" value="Hexapep"/>
</dbReference>
<dbReference type="InterPro" id="IPR018357">
    <property type="entry name" value="Hexapep_transf_CS"/>
</dbReference>
<dbReference type="InterPro" id="IPR023180">
    <property type="entry name" value="THP_succinylTrfase_dom1"/>
</dbReference>
<dbReference type="InterPro" id="IPR037133">
    <property type="entry name" value="THP_succinylTrfase_N_sf"/>
</dbReference>
<dbReference type="InterPro" id="IPR011004">
    <property type="entry name" value="Trimer_LpxA-like_sf"/>
</dbReference>
<dbReference type="NCBIfam" id="TIGR00965">
    <property type="entry name" value="dapD"/>
    <property type="match status" value="1"/>
</dbReference>
<dbReference type="NCBIfam" id="NF008808">
    <property type="entry name" value="PRK11830.1"/>
    <property type="match status" value="1"/>
</dbReference>
<dbReference type="PANTHER" id="PTHR19136:SF52">
    <property type="entry name" value="2,3,4,5-TETRAHYDROPYRIDINE-2,6-DICARBOXYLATE N-SUCCINYLTRANSFERASE"/>
    <property type="match status" value="1"/>
</dbReference>
<dbReference type="PANTHER" id="PTHR19136">
    <property type="entry name" value="MOLYBDENUM COFACTOR GUANYLYLTRANSFERASE"/>
    <property type="match status" value="1"/>
</dbReference>
<dbReference type="Pfam" id="PF14602">
    <property type="entry name" value="Hexapep_2"/>
    <property type="match status" value="1"/>
</dbReference>
<dbReference type="Pfam" id="PF14805">
    <property type="entry name" value="THDPS_N_2"/>
    <property type="match status" value="1"/>
</dbReference>
<dbReference type="SUPFAM" id="SSF51161">
    <property type="entry name" value="Trimeric LpxA-like enzymes"/>
    <property type="match status" value="1"/>
</dbReference>
<dbReference type="PROSITE" id="PS00101">
    <property type="entry name" value="HEXAPEP_TRANSFERASES"/>
    <property type="match status" value="1"/>
</dbReference>
<keyword id="KW-0012">Acyltransferase</keyword>
<keyword id="KW-0028">Amino-acid biosynthesis</keyword>
<keyword id="KW-0963">Cytoplasm</keyword>
<keyword id="KW-0220">Diaminopimelate biosynthesis</keyword>
<keyword id="KW-0457">Lysine biosynthesis</keyword>
<keyword id="KW-1185">Reference proteome</keyword>
<keyword id="KW-0677">Repeat</keyword>
<keyword id="KW-0808">Transferase</keyword>
<comment type="catalytic activity">
    <reaction evidence="1">
        <text>(S)-2,3,4,5-tetrahydrodipicolinate + succinyl-CoA + H2O = (S)-2-succinylamino-6-oxoheptanedioate + CoA</text>
        <dbReference type="Rhea" id="RHEA:17325"/>
        <dbReference type="ChEBI" id="CHEBI:15377"/>
        <dbReference type="ChEBI" id="CHEBI:15685"/>
        <dbReference type="ChEBI" id="CHEBI:16845"/>
        <dbReference type="ChEBI" id="CHEBI:57287"/>
        <dbReference type="ChEBI" id="CHEBI:57292"/>
        <dbReference type="EC" id="2.3.1.117"/>
    </reaction>
</comment>
<comment type="pathway">
    <text evidence="1">Amino-acid biosynthesis; L-lysine biosynthesis via DAP pathway; LL-2,6-diaminopimelate from (S)-tetrahydrodipicolinate (succinylase route): step 1/3.</text>
</comment>
<comment type="subunit">
    <text evidence="1">Homotrimer.</text>
</comment>
<comment type="subcellular location">
    <subcellularLocation>
        <location evidence="1">Cytoplasm</location>
    </subcellularLocation>
</comment>
<comment type="similarity">
    <text evidence="1">Belongs to the transferase hexapeptide repeat family.</text>
</comment>
<reference key="1">
    <citation type="journal article" date="2009" name="PLoS Genet.">
        <title>The complete genome and proteome of Laribacter hongkongensis reveal potential mechanisms for adaptations to different temperatures and habitats.</title>
        <authorList>
            <person name="Woo P.C.Y."/>
            <person name="Lau S.K.P."/>
            <person name="Tse H."/>
            <person name="Teng J.L.L."/>
            <person name="Curreem S.O."/>
            <person name="Tsang A.K.L."/>
            <person name="Fan R.Y.Y."/>
            <person name="Wong G.K.M."/>
            <person name="Huang Y."/>
            <person name="Loman N.J."/>
            <person name="Snyder L.A.S."/>
            <person name="Cai J.J."/>
            <person name="Huang J.-D."/>
            <person name="Mak W."/>
            <person name="Pallen M.J."/>
            <person name="Lok S."/>
            <person name="Yuen K.-Y."/>
        </authorList>
    </citation>
    <scope>NUCLEOTIDE SEQUENCE [LARGE SCALE GENOMIC DNA]</scope>
    <source>
        <strain>HLHK9</strain>
    </source>
</reference>
<proteinExistence type="inferred from homology"/>
<organism>
    <name type="scientific">Laribacter hongkongensis (strain HLHK9)</name>
    <dbReference type="NCBI Taxonomy" id="557598"/>
    <lineage>
        <taxon>Bacteria</taxon>
        <taxon>Pseudomonadati</taxon>
        <taxon>Pseudomonadota</taxon>
        <taxon>Betaproteobacteria</taxon>
        <taxon>Neisseriales</taxon>
        <taxon>Aquaspirillaceae</taxon>
        <taxon>Laribacter</taxon>
    </lineage>
</organism>
<feature type="chain" id="PRO_1000148585" description="2,3,4,5-tetrahydropyridine-2,6-dicarboxylate N-succinyltransferase">
    <location>
        <begin position="1"/>
        <end position="273"/>
    </location>
</feature>
<feature type="binding site" evidence="1">
    <location>
        <position position="104"/>
    </location>
    <ligand>
        <name>substrate</name>
    </ligand>
</feature>
<feature type="binding site" evidence="1">
    <location>
        <position position="141"/>
    </location>
    <ligand>
        <name>substrate</name>
    </ligand>
</feature>
<evidence type="ECO:0000255" key="1">
    <source>
        <dbReference type="HAMAP-Rule" id="MF_00811"/>
    </source>
</evidence>
<accession>C1DD37</accession>
<protein>
    <recommendedName>
        <fullName evidence="1">2,3,4,5-tetrahydropyridine-2,6-dicarboxylate N-succinyltransferase</fullName>
        <ecNumber evidence="1">2.3.1.117</ecNumber>
    </recommendedName>
    <alternativeName>
        <fullName evidence="1">Tetrahydrodipicolinate N-succinyltransferase</fullName>
        <shortName evidence="1">THDP succinyltransferase</shortName>
        <shortName evidence="1">THP succinyltransferase</shortName>
        <shortName evidence="1">Tetrahydropicolinate succinylase</shortName>
    </alternativeName>
</protein>